<accession>C3MD93</accession>
<name>RECA_SINFN</name>
<keyword id="KW-0067">ATP-binding</keyword>
<keyword id="KW-0963">Cytoplasm</keyword>
<keyword id="KW-0227">DNA damage</keyword>
<keyword id="KW-0233">DNA recombination</keyword>
<keyword id="KW-0234">DNA repair</keyword>
<keyword id="KW-0238">DNA-binding</keyword>
<keyword id="KW-0547">Nucleotide-binding</keyword>
<keyword id="KW-1185">Reference proteome</keyword>
<keyword id="KW-0742">SOS response</keyword>
<sequence>MAQNSLRLVEDKSVDKSKALEAALSQIERSFGKGSIMKLGSKDSVIEIETVSTGSLGLDIALGIGGLPKGRIIEIYGPESSGKTTLALQTIAEAQKKGGICGFVDAEHALDPVYARKLGVDLENLLISQPDTGEQALEITDTLVRSGAIDVLVVDSVAALVPRAEIEGEMGDSLPGMQARLMSQALRKLTASISKSNCMVIFINQIRMKIGVMFGSPETTTGGNALKFYASVRLDIRRIGSVKEREEVVGNQTRVKVVKNKMAPPFKQVEFDIMYGEGVSKTGELIDLGVKAGIVEKSGAWFSYNSQRLGQGRENAKLFLRDNPDLLREIEMALRQNAGLIADKFLENGGPESEGDEAADM</sequence>
<protein>
    <recommendedName>
        <fullName evidence="1">Protein RecA</fullName>
    </recommendedName>
    <alternativeName>
        <fullName evidence="1">Recombinase A</fullName>
    </alternativeName>
</protein>
<feature type="chain" id="PRO_1000193323" description="Protein RecA">
    <location>
        <begin position="1"/>
        <end position="361"/>
    </location>
</feature>
<feature type="binding site" evidence="1">
    <location>
        <begin position="77"/>
        <end position="84"/>
    </location>
    <ligand>
        <name>ATP</name>
        <dbReference type="ChEBI" id="CHEBI:30616"/>
    </ligand>
</feature>
<dbReference type="EMBL" id="CP001389">
    <property type="protein sequence ID" value="ACP25412.1"/>
    <property type="molecule type" value="Genomic_DNA"/>
</dbReference>
<dbReference type="RefSeq" id="WP_012708181.1">
    <property type="nucleotide sequence ID" value="NC_012587.1"/>
</dbReference>
<dbReference type="RefSeq" id="YP_002826165.1">
    <property type="nucleotide sequence ID" value="NC_012587.1"/>
</dbReference>
<dbReference type="SMR" id="C3MD93"/>
<dbReference type="STRING" id="394.NGR_c16470"/>
<dbReference type="KEGG" id="rhi:NGR_c16470"/>
<dbReference type="PATRIC" id="fig|394.7.peg.4464"/>
<dbReference type="eggNOG" id="COG0468">
    <property type="taxonomic scope" value="Bacteria"/>
</dbReference>
<dbReference type="HOGENOM" id="CLU_040469_3_2_5"/>
<dbReference type="OrthoDB" id="9776733at2"/>
<dbReference type="Proteomes" id="UP000001054">
    <property type="component" value="Chromosome"/>
</dbReference>
<dbReference type="GO" id="GO:0005829">
    <property type="term" value="C:cytosol"/>
    <property type="evidence" value="ECO:0007669"/>
    <property type="project" value="TreeGrafter"/>
</dbReference>
<dbReference type="GO" id="GO:0005524">
    <property type="term" value="F:ATP binding"/>
    <property type="evidence" value="ECO:0007669"/>
    <property type="project" value="UniProtKB-UniRule"/>
</dbReference>
<dbReference type="GO" id="GO:0016887">
    <property type="term" value="F:ATP hydrolysis activity"/>
    <property type="evidence" value="ECO:0007669"/>
    <property type="project" value="InterPro"/>
</dbReference>
<dbReference type="GO" id="GO:0140664">
    <property type="term" value="F:ATP-dependent DNA damage sensor activity"/>
    <property type="evidence" value="ECO:0007669"/>
    <property type="project" value="InterPro"/>
</dbReference>
<dbReference type="GO" id="GO:0003684">
    <property type="term" value="F:damaged DNA binding"/>
    <property type="evidence" value="ECO:0007669"/>
    <property type="project" value="UniProtKB-UniRule"/>
</dbReference>
<dbReference type="GO" id="GO:0003697">
    <property type="term" value="F:single-stranded DNA binding"/>
    <property type="evidence" value="ECO:0007669"/>
    <property type="project" value="UniProtKB-UniRule"/>
</dbReference>
<dbReference type="GO" id="GO:0006310">
    <property type="term" value="P:DNA recombination"/>
    <property type="evidence" value="ECO:0007669"/>
    <property type="project" value="UniProtKB-UniRule"/>
</dbReference>
<dbReference type="GO" id="GO:0006281">
    <property type="term" value="P:DNA repair"/>
    <property type="evidence" value="ECO:0007669"/>
    <property type="project" value="UniProtKB-UniRule"/>
</dbReference>
<dbReference type="GO" id="GO:0009432">
    <property type="term" value="P:SOS response"/>
    <property type="evidence" value="ECO:0007669"/>
    <property type="project" value="UniProtKB-UniRule"/>
</dbReference>
<dbReference type="CDD" id="cd00983">
    <property type="entry name" value="RecA"/>
    <property type="match status" value="1"/>
</dbReference>
<dbReference type="FunFam" id="3.40.50.300:FF:000087">
    <property type="entry name" value="Recombinase RecA"/>
    <property type="match status" value="1"/>
</dbReference>
<dbReference type="Gene3D" id="3.40.50.300">
    <property type="entry name" value="P-loop containing nucleotide triphosphate hydrolases"/>
    <property type="match status" value="1"/>
</dbReference>
<dbReference type="HAMAP" id="MF_00268">
    <property type="entry name" value="RecA"/>
    <property type="match status" value="1"/>
</dbReference>
<dbReference type="InterPro" id="IPR003593">
    <property type="entry name" value="AAA+_ATPase"/>
</dbReference>
<dbReference type="InterPro" id="IPR013765">
    <property type="entry name" value="DNA_recomb/repair_RecA"/>
</dbReference>
<dbReference type="InterPro" id="IPR020584">
    <property type="entry name" value="DNA_recomb/repair_RecA_CS"/>
</dbReference>
<dbReference type="InterPro" id="IPR027417">
    <property type="entry name" value="P-loop_NTPase"/>
</dbReference>
<dbReference type="InterPro" id="IPR049261">
    <property type="entry name" value="RecA-like_C"/>
</dbReference>
<dbReference type="InterPro" id="IPR049428">
    <property type="entry name" value="RecA-like_N"/>
</dbReference>
<dbReference type="InterPro" id="IPR020588">
    <property type="entry name" value="RecA_ATP-bd"/>
</dbReference>
<dbReference type="InterPro" id="IPR023400">
    <property type="entry name" value="RecA_C_sf"/>
</dbReference>
<dbReference type="InterPro" id="IPR020587">
    <property type="entry name" value="RecA_monomer-monomer_interface"/>
</dbReference>
<dbReference type="NCBIfam" id="TIGR02012">
    <property type="entry name" value="tigrfam_recA"/>
    <property type="match status" value="1"/>
</dbReference>
<dbReference type="PANTHER" id="PTHR45900:SF1">
    <property type="entry name" value="MITOCHONDRIAL DNA REPAIR PROTEIN RECA HOMOLOG-RELATED"/>
    <property type="match status" value="1"/>
</dbReference>
<dbReference type="PANTHER" id="PTHR45900">
    <property type="entry name" value="RECA"/>
    <property type="match status" value="1"/>
</dbReference>
<dbReference type="Pfam" id="PF00154">
    <property type="entry name" value="RecA"/>
    <property type="match status" value="1"/>
</dbReference>
<dbReference type="Pfam" id="PF21096">
    <property type="entry name" value="RecA_C"/>
    <property type="match status" value="1"/>
</dbReference>
<dbReference type="PRINTS" id="PR00142">
    <property type="entry name" value="RECA"/>
</dbReference>
<dbReference type="SMART" id="SM00382">
    <property type="entry name" value="AAA"/>
    <property type="match status" value="1"/>
</dbReference>
<dbReference type="SUPFAM" id="SSF52540">
    <property type="entry name" value="P-loop containing nucleoside triphosphate hydrolases"/>
    <property type="match status" value="1"/>
</dbReference>
<dbReference type="SUPFAM" id="SSF54752">
    <property type="entry name" value="RecA protein, C-terminal domain"/>
    <property type="match status" value="1"/>
</dbReference>
<dbReference type="PROSITE" id="PS00321">
    <property type="entry name" value="RECA_1"/>
    <property type="match status" value="1"/>
</dbReference>
<dbReference type="PROSITE" id="PS50162">
    <property type="entry name" value="RECA_2"/>
    <property type="match status" value="1"/>
</dbReference>
<dbReference type="PROSITE" id="PS50163">
    <property type="entry name" value="RECA_3"/>
    <property type="match status" value="1"/>
</dbReference>
<evidence type="ECO:0000255" key="1">
    <source>
        <dbReference type="HAMAP-Rule" id="MF_00268"/>
    </source>
</evidence>
<comment type="function">
    <text evidence="1">Can catalyze the hydrolysis of ATP in the presence of single-stranded DNA, the ATP-dependent uptake of single-stranded DNA by duplex DNA, and the ATP-dependent hybridization of homologous single-stranded DNAs. It interacts with LexA causing its activation and leading to its autocatalytic cleavage.</text>
</comment>
<comment type="subcellular location">
    <subcellularLocation>
        <location evidence="1">Cytoplasm</location>
    </subcellularLocation>
</comment>
<comment type="similarity">
    <text evidence="1">Belongs to the RecA family.</text>
</comment>
<reference key="1">
    <citation type="journal article" date="2009" name="Appl. Environ. Microbiol.">
        <title>Rhizobium sp. strain NGR234 possesses a remarkable number of secretion systems.</title>
        <authorList>
            <person name="Schmeisser C."/>
            <person name="Liesegang H."/>
            <person name="Krysciak D."/>
            <person name="Bakkou N."/>
            <person name="Le Quere A."/>
            <person name="Wollherr A."/>
            <person name="Heinemeyer I."/>
            <person name="Morgenstern B."/>
            <person name="Pommerening-Roeser A."/>
            <person name="Flores M."/>
            <person name="Palacios R."/>
            <person name="Brenner S."/>
            <person name="Gottschalk G."/>
            <person name="Schmitz R.A."/>
            <person name="Broughton W.J."/>
            <person name="Perret X."/>
            <person name="Strittmatter A.W."/>
            <person name="Streit W.R."/>
        </authorList>
    </citation>
    <scope>NUCLEOTIDE SEQUENCE [LARGE SCALE GENOMIC DNA]</scope>
    <source>
        <strain>NBRC 101917 / NGR234</strain>
    </source>
</reference>
<gene>
    <name evidence="1" type="primary">recA</name>
    <name type="ordered locus">NGR_c16470</name>
</gene>
<proteinExistence type="inferred from homology"/>
<organism>
    <name type="scientific">Sinorhizobium fredii (strain NBRC 101917 / NGR234)</name>
    <dbReference type="NCBI Taxonomy" id="394"/>
    <lineage>
        <taxon>Bacteria</taxon>
        <taxon>Pseudomonadati</taxon>
        <taxon>Pseudomonadota</taxon>
        <taxon>Alphaproteobacteria</taxon>
        <taxon>Hyphomicrobiales</taxon>
        <taxon>Rhizobiaceae</taxon>
        <taxon>Sinorhizobium/Ensifer group</taxon>
        <taxon>Sinorhizobium</taxon>
    </lineage>
</organism>